<gene>
    <name type="primary">SH3BP2</name>
    <name type="synonym">3BP2</name>
    <name type="ORF">RES4-23</name>
</gene>
<keyword id="KW-0002">3D-structure</keyword>
<keyword id="KW-0025">Alternative splicing</keyword>
<keyword id="KW-0225">Disease variant</keyword>
<keyword id="KW-0597">Phosphoprotein</keyword>
<keyword id="KW-1267">Proteomics identification</keyword>
<keyword id="KW-1185">Reference proteome</keyword>
<keyword id="KW-0727">SH2 domain</keyword>
<keyword id="KW-0729">SH3-binding</keyword>
<proteinExistence type="evidence at protein level"/>
<feature type="chain" id="PRO_0000064365" description="SH3 domain-binding protein 2">
    <location>
        <begin position="1"/>
        <end position="561"/>
    </location>
</feature>
<feature type="domain" description="PH" evidence="3">
    <location>
        <begin position="26"/>
        <end position="130"/>
    </location>
</feature>
<feature type="domain" description="SH2" evidence="4">
    <location>
        <begin position="457"/>
        <end position="555"/>
    </location>
</feature>
<feature type="region of interest" description="Disordered" evidence="5">
    <location>
        <begin position="160"/>
        <end position="316"/>
    </location>
</feature>
<feature type="region of interest" description="Disordered" evidence="5">
    <location>
        <begin position="333"/>
        <end position="451"/>
    </location>
</feature>
<feature type="short sequence motif" description="SH3-binding">
    <location>
        <begin position="201"/>
        <end position="210"/>
    </location>
</feature>
<feature type="compositionally biased region" description="Acidic residues" evidence="5">
    <location>
        <begin position="170"/>
        <end position="188"/>
    </location>
</feature>
<feature type="compositionally biased region" description="Pro residues" evidence="5">
    <location>
        <begin position="202"/>
        <end position="213"/>
    </location>
</feature>
<feature type="compositionally biased region" description="Pro residues" evidence="5">
    <location>
        <begin position="233"/>
        <end position="242"/>
    </location>
</feature>
<feature type="compositionally biased region" description="Basic and acidic residues" evidence="5">
    <location>
        <begin position="252"/>
        <end position="266"/>
    </location>
</feature>
<feature type="compositionally biased region" description="Pro residues" evidence="5">
    <location>
        <begin position="342"/>
        <end position="354"/>
    </location>
</feature>
<feature type="modified residue" description="Phosphotyrosine; by SYK" evidence="2">
    <location>
        <position position="174"/>
    </location>
</feature>
<feature type="modified residue" description="Phosphotyrosine; by SYK" evidence="2">
    <location>
        <position position="183"/>
    </location>
</feature>
<feature type="modified residue" description="Phosphoserine" evidence="13 14 15">
    <location>
        <position position="278"/>
    </location>
</feature>
<feature type="modified residue" description="Phosphoserine" evidence="15">
    <location>
        <position position="416"/>
    </location>
</feature>
<feature type="modified residue" description="Phosphoserine" evidence="14">
    <location>
        <position position="427"/>
    </location>
</feature>
<feature type="modified residue" description="Phosphotyrosine; by SYK" evidence="2">
    <location>
        <position position="448"/>
    </location>
</feature>
<feature type="splice variant" id="VSP_043636" description="In isoform 3." evidence="10">
    <original>M</original>
    <variation>MASLGPRTPAPSRSRGRRAMCWVSTISFM</variation>
    <location>
        <position position="1"/>
    </location>
</feature>
<feature type="splice variant" id="VSP_055046" description="In isoform 4." evidence="12">
    <original>M</original>
    <variation>MAGSGPRPRSWGRREAGARDEAAAAGGRGPGPCRCSQGRRAWIAPGKPAMPAAWTPFM</variation>
    <location>
        <position position="1"/>
    </location>
</feature>
<feature type="splice variant" id="VSP_004085" description="In isoform 2." evidence="10 11">
    <original>VMRAAEETTSNNVFPFK</original>
    <variation>QPRPQPAQALSQTEAGP</variation>
    <location>
        <begin position="81"/>
        <end position="97"/>
    </location>
</feature>
<feature type="splice variant" id="VSP_004086" description="In isoform 2." evidence="10 11">
    <location>
        <begin position="98"/>
        <end position="561"/>
    </location>
</feature>
<feature type="sequence variant" id="VAR_013257" description="In CRBM; dbSNP:rs121909149." evidence="6">
    <original>R</original>
    <variation>P</variation>
    <location>
        <position position="415"/>
    </location>
</feature>
<feature type="sequence variant" id="VAR_013258" description="In CRBM; dbSNP:rs121909149." evidence="6">
    <original>R</original>
    <variation>Q</variation>
    <location>
        <position position="415"/>
    </location>
</feature>
<feature type="sequence variant" id="VAR_013259" description="In CRBM; dbSNP:rs121909146." evidence="6">
    <original>P</original>
    <variation>H</variation>
    <location>
        <position position="418"/>
    </location>
</feature>
<feature type="sequence variant" id="VAR_013260" description="In CRBM; dbSNP:rs121909146." evidence="6">
    <original>P</original>
    <variation>L</variation>
    <location>
        <position position="418"/>
    </location>
</feature>
<feature type="sequence variant" id="VAR_013261" description="In CRBM; dbSNP:rs121909146." evidence="6 8">
    <original>P</original>
    <variation>R</variation>
    <location>
        <position position="418"/>
    </location>
</feature>
<feature type="sequence variant" id="VAR_013262" description="In CRBM; dbSNP:rs28938171." evidence="6">
    <original>G</original>
    <variation>E</variation>
    <location>
        <position position="420"/>
    </location>
</feature>
<feature type="sequence variant" id="VAR_013263" description="In CRBM; dbSNP:rs28938170." evidence="6 7">
    <original>G</original>
    <variation>R</variation>
    <location>
        <position position="420"/>
    </location>
</feature>
<feature type="sequence conflict" description="In Ref. 3; AAB59973." evidence="12" ref="3">
    <original>V</original>
    <variation>L</variation>
    <location>
        <position position="27"/>
    </location>
</feature>
<feature type="sequence conflict" description="In Ref. 3; AAB59973." evidence="12" ref="3">
    <original>H</original>
    <variation>N</variation>
    <location>
        <position position="224"/>
    </location>
</feature>
<feature type="sequence conflict" description="In Ref. 3; AAB59973." evidence="12" ref="3">
    <original>L</original>
    <variation>R</variation>
    <location>
        <position position="249"/>
    </location>
</feature>
<feature type="sequence conflict" description="In Ref. 3; AAB59973." evidence="12" ref="3">
    <original>A</original>
    <variation>P</variation>
    <location>
        <position position="251"/>
    </location>
</feature>
<feature type="turn" evidence="16">
    <location>
        <begin position="455"/>
        <end position="457"/>
    </location>
</feature>
<feature type="helix" evidence="16">
    <location>
        <begin position="464"/>
        <end position="474"/>
    </location>
</feature>
<feature type="strand" evidence="16">
    <location>
        <begin position="485"/>
        <end position="489"/>
    </location>
</feature>
<feature type="strand" evidence="16">
    <location>
        <begin position="496"/>
        <end position="501"/>
    </location>
</feature>
<feature type="turn" evidence="16">
    <location>
        <begin position="503"/>
        <end position="505"/>
    </location>
</feature>
<feature type="strand" evidence="16">
    <location>
        <begin position="506"/>
        <end position="508"/>
    </location>
</feature>
<feature type="strand" evidence="16">
    <location>
        <begin position="514"/>
        <end position="516"/>
    </location>
</feature>
<feature type="strand" evidence="16">
    <location>
        <begin position="519"/>
        <end position="525"/>
    </location>
</feature>
<feature type="strand" evidence="16">
    <location>
        <begin position="527"/>
        <end position="530"/>
    </location>
</feature>
<feature type="helix" evidence="16">
    <location>
        <begin position="531"/>
        <end position="538"/>
    </location>
</feature>
<feature type="strand" evidence="16">
    <location>
        <begin position="544"/>
        <end position="548"/>
    </location>
</feature>
<feature type="strand" evidence="16">
    <location>
        <begin position="553"/>
        <end position="556"/>
    </location>
</feature>
<dbReference type="EMBL" id="AF000936">
    <property type="protein sequence ID" value="AAB59973.1"/>
    <property type="molecule type" value="mRNA"/>
</dbReference>
<dbReference type="EMBL" id="U56386">
    <property type="protein sequence ID" value="AAB72034.1"/>
    <property type="molecule type" value="mRNA"/>
</dbReference>
<dbReference type="EMBL" id="AB000462">
    <property type="protein sequence ID" value="BAA19119.1"/>
    <property type="molecule type" value="mRNA"/>
</dbReference>
<dbReference type="EMBL" id="AB000463">
    <property type="protein sequence ID" value="BAA19120.1"/>
    <property type="molecule type" value="mRNA"/>
</dbReference>
<dbReference type="EMBL" id="AK299996">
    <property type="protein sequence ID" value="BAG61816.1"/>
    <property type="molecule type" value="mRNA"/>
</dbReference>
<dbReference type="EMBL" id="AK312286">
    <property type="protein sequence ID" value="BAG35213.1"/>
    <property type="molecule type" value="mRNA"/>
</dbReference>
<dbReference type="EMBL" id="AL121750">
    <property type="status" value="NOT_ANNOTATED_CDS"/>
    <property type="molecule type" value="Genomic_DNA"/>
</dbReference>
<dbReference type="EMBL" id="CH471131">
    <property type="protein sequence ID" value="EAW82509.1"/>
    <property type="molecule type" value="Genomic_DNA"/>
</dbReference>
<dbReference type="EMBL" id="CH471131">
    <property type="protein sequence ID" value="EAW82510.1"/>
    <property type="molecule type" value="Genomic_DNA"/>
</dbReference>
<dbReference type="EMBL" id="CH471131">
    <property type="protein sequence ID" value="EAW82511.1"/>
    <property type="molecule type" value="Genomic_DNA"/>
</dbReference>
<dbReference type="EMBL" id="CH471131">
    <property type="protein sequence ID" value="EAW82512.1"/>
    <property type="molecule type" value="Genomic_DNA"/>
</dbReference>
<dbReference type="EMBL" id="BC022996">
    <property type="protein sequence ID" value="AAH22996.1"/>
    <property type="molecule type" value="mRNA"/>
</dbReference>
<dbReference type="CCDS" id="CCDS33944.1">
    <molecule id="P78314-1"/>
</dbReference>
<dbReference type="CCDS" id="CCDS54715.1">
    <molecule id="P78314-3"/>
</dbReference>
<dbReference type="CCDS" id="CCDS54716.1">
    <molecule id="P78314-4"/>
</dbReference>
<dbReference type="RefSeq" id="NP_001116153.1">
    <molecule id="P78314-1"/>
    <property type="nucleotide sequence ID" value="NM_001122681.2"/>
</dbReference>
<dbReference type="RefSeq" id="NP_001139327.1">
    <molecule id="P78314-3"/>
    <property type="nucleotide sequence ID" value="NM_001145855.2"/>
</dbReference>
<dbReference type="RefSeq" id="NP_001139328.1">
    <molecule id="P78314-4"/>
    <property type="nucleotide sequence ID" value="NM_001145856.2"/>
</dbReference>
<dbReference type="RefSeq" id="NP_003014.3">
    <molecule id="P78314-1"/>
    <property type="nucleotide sequence ID" value="NM_003023.4"/>
</dbReference>
<dbReference type="PDB" id="2CR4">
    <property type="method" value="NMR"/>
    <property type="chains" value="A=446-558"/>
</dbReference>
<dbReference type="PDB" id="3TWR">
    <property type="method" value="X-ray"/>
    <property type="resolution" value="1.55 A"/>
    <property type="chains" value="E/F/G/H=410-425"/>
</dbReference>
<dbReference type="PDBsum" id="2CR4"/>
<dbReference type="PDBsum" id="3TWR"/>
<dbReference type="SMR" id="P78314"/>
<dbReference type="BioGRID" id="112350">
    <property type="interactions" value="37"/>
</dbReference>
<dbReference type="FunCoup" id="P78314">
    <property type="interactions" value="419"/>
</dbReference>
<dbReference type="IntAct" id="P78314">
    <property type="interactions" value="27"/>
</dbReference>
<dbReference type="MINT" id="P78314"/>
<dbReference type="STRING" id="9606.ENSP00000424846"/>
<dbReference type="GlyGen" id="P78314">
    <property type="glycosylation" value="2 sites, 1 O-linked glycan (1 site)"/>
</dbReference>
<dbReference type="iPTMnet" id="P78314"/>
<dbReference type="PhosphoSitePlus" id="P78314"/>
<dbReference type="BioMuta" id="SH3BP2"/>
<dbReference type="DMDM" id="3023207"/>
<dbReference type="jPOST" id="P78314"/>
<dbReference type="MassIVE" id="P78314"/>
<dbReference type="PaxDb" id="9606-ENSP00000422168"/>
<dbReference type="PeptideAtlas" id="P78314"/>
<dbReference type="ProteomicsDB" id="12870"/>
<dbReference type="ProteomicsDB" id="57557">
    <molecule id="P78314-1"/>
</dbReference>
<dbReference type="ProteomicsDB" id="57558">
    <molecule id="P78314-2"/>
</dbReference>
<dbReference type="ProteomicsDB" id="57559">
    <molecule id="P78314-3"/>
</dbReference>
<dbReference type="Pumba" id="P78314"/>
<dbReference type="Antibodypedia" id="8898">
    <property type="antibodies" value="197 antibodies from 30 providers"/>
</dbReference>
<dbReference type="DNASU" id="6452"/>
<dbReference type="Ensembl" id="ENST00000435136.8">
    <molecule id="P78314-3"/>
    <property type="protein sequence ID" value="ENSP00000403231.3"/>
    <property type="gene ID" value="ENSG00000087266.18"/>
</dbReference>
<dbReference type="Ensembl" id="ENST00000502260.6">
    <molecule id="P78314-1"/>
    <property type="protein sequence ID" value="ENSP00000425537.2"/>
    <property type="gene ID" value="ENSG00000087266.18"/>
</dbReference>
<dbReference type="Ensembl" id="ENST00000503219.7">
    <molecule id="P78314-1"/>
    <property type="protein sequence ID" value="ENSP00000422796.2"/>
    <property type="gene ID" value="ENSG00000087266.18"/>
</dbReference>
<dbReference type="Ensembl" id="ENST00000503393.8">
    <molecule id="P78314-1"/>
    <property type="protein sequence ID" value="ENSP00000422168.3"/>
    <property type="gene ID" value="ENSG00000087266.18"/>
</dbReference>
<dbReference type="Ensembl" id="ENST00000504294.6">
    <molecule id="P78314-1"/>
    <property type="protein sequence ID" value="ENSP00000423275.2"/>
    <property type="gene ID" value="ENSG00000087266.18"/>
</dbReference>
<dbReference type="Ensembl" id="ENST00000508385.6">
    <molecule id="P78314-1"/>
    <property type="protein sequence ID" value="ENSP00000424917.2"/>
    <property type="gene ID" value="ENSG00000087266.18"/>
</dbReference>
<dbReference type="Ensembl" id="ENST00000511747.6">
    <molecule id="P78314-4"/>
    <property type="protein sequence ID" value="ENSP00000424846.2"/>
    <property type="gene ID" value="ENSG00000087266.18"/>
</dbReference>
<dbReference type="Ensembl" id="ENST00000512014.6">
    <molecule id="P78314-1"/>
    <property type="protein sequence ID" value="ENSP00000424105.2"/>
    <property type="gene ID" value="ENSG00000087266.18"/>
</dbReference>
<dbReference type="Ensembl" id="ENST00000513020.6">
    <molecule id="P78314-2"/>
    <property type="protein sequence ID" value="ENSP00000424072.1"/>
    <property type="gene ID" value="ENSG00000087266.18"/>
</dbReference>
<dbReference type="Ensembl" id="ENST00000513095.6">
    <molecule id="P78314-1"/>
    <property type="protein sequence ID" value="ENSP00000423823.2"/>
    <property type="gene ID" value="ENSG00000087266.18"/>
</dbReference>
<dbReference type="GeneID" id="6452"/>
<dbReference type="KEGG" id="hsa:6452"/>
<dbReference type="MANE-Select" id="ENST00000503393.8">
    <property type="protein sequence ID" value="ENSP00000422168.3"/>
    <property type="RefSeq nucleotide sequence ID" value="NM_001122681.2"/>
    <property type="RefSeq protein sequence ID" value="NP_001116153.1"/>
</dbReference>
<dbReference type="UCSC" id="uc003gfi.5">
    <molecule id="P78314-1"/>
    <property type="organism name" value="human"/>
</dbReference>
<dbReference type="AGR" id="HGNC:10825"/>
<dbReference type="CTD" id="6452"/>
<dbReference type="DisGeNET" id="6452"/>
<dbReference type="GeneCards" id="SH3BP2"/>
<dbReference type="GeneReviews" id="SH3BP2"/>
<dbReference type="HGNC" id="HGNC:10825">
    <property type="gene designation" value="SH3BP2"/>
</dbReference>
<dbReference type="HPA" id="ENSG00000087266">
    <property type="expression patterns" value="Low tissue specificity"/>
</dbReference>
<dbReference type="MalaCards" id="SH3BP2"/>
<dbReference type="MIM" id="118400">
    <property type="type" value="phenotype"/>
</dbReference>
<dbReference type="MIM" id="602104">
    <property type="type" value="gene"/>
</dbReference>
<dbReference type="neXtProt" id="NX_P78314"/>
<dbReference type="OpenTargets" id="ENSG00000087266"/>
<dbReference type="Orphanet" id="184">
    <property type="disease" value="Cherubism"/>
</dbReference>
<dbReference type="PharmGKB" id="PA35733"/>
<dbReference type="VEuPathDB" id="HostDB:ENSG00000087266"/>
<dbReference type="eggNOG" id="ENOG502RF2Z">
    <property type="taxonomic scope" value="Eukaryota"/>
</dbReference>
<dbReference type="GeneTree" id="ENSGT00390000002216"/>
<dbReference type="HOGENOM" id="CLU_040124_0_0_1"/>
<dbReference type="InParanoid" id="P78314"/>
<dbReference type="OrthoDB" id="10254483at2759"/>
<dbReference type="PAN-GO" id="P78314">
    <property type="GO annotations" value="1 GO annotation based on evolutionary models"/>
</dbReference>
<dbReference type="PhylomeDB" id="P78314"/>
<dbReference type="TreeFam" id="TF333342"/>
<dbReference type="PathwayCommons" id="P78314"/>
<dbReference type="SignaLink" id="P78314"/>
<dbReference type="SIGNOR" id="P78314"/>
<dbReference type="BioGRID-ORCS" id="6452">
    <property type="hits" value="19 hits in 1153 CRISPR screens"/>
</dbReference>
<dbReference type="ChiTaRS" id="SH3BP2">
    <property type="organism name" value="human"/>
</dbReference>
<dbReference type="EvolutionaryTrace" id="P78314"/>
<dbReference type="GenomeRNAi" id="6452"/>
<dbReference type="Pharos" id="P78314">
    <property type="development level" value="Tbio"/>
</dbReference>
<dbReference type="PRO" id="PR:P78314"/>
<dbReference type="Proteomes" id="UP000005640">
    <property type="component" value="Chromosome 4"/>
</dbReference>
<dbReference type="RNAct" id="P78314">
    <property type="molecule type" value="protein"/>
</dbReference>
<dbReference type="Bgee" id="ENSG00000087266">
    <property type="expression patterns" value="Expressed in granulocyte and 137 other cell types or tissues"/>
</dbReference>
<dbReference type="ExpressionAtlas" id="P78314">
    <property type="expression patterns" value="baseline and differential"/>
</dbReference>
<dbReference type="GO" id="GO:0001784">
    <property type="term" value="F:phosphotyrosine residue binding"/>
    <property type="evidence" value="ECO:0000353"/>
    <property type="project" value="CAFA"/>
</dbReference>
<dbReference type="GO" id="GO:0017124">
    <property type="term" value="F:SH3 domain binding"/>
    <property type="evidence" value="ECO:0007669"/>
    <property type="project" value="UniProtKB-KW"/>
</dbReference>
<dbReference type="GO" id="GO:0007165">
    <property type="term" value="P:signal transduction"/>
    <property type="evidence" value="ECO:0000304"/>
    <property type="project" value="ProtInc"/>
</dbReference>
<dbReference type="CDD" id="cd13308">
    <property type="entry name" value="PH_3BP2"/>
    <property type="match status" value="1"/>
</dbReference>
<dbReference type="CDD" id="cd10359">
    <property type="entry name" value="SH2_SH3BP2"/>
    <property type="match status" value="1"/>
</dbReference>
<dbReference type="FunFam" id="3.30.505.10:FF:000043">
    <property type="entry name" value="SH3 domain binding protein 2"/>
    <property type="match status" value="1"/>
</dbReference>
<dbReference type="FunFam" id="2.30.29.30:FF:000147">
    <property type="entry name" value="SH3 domain-binding protein 2 isoform X2"/>
    <property type="match status" value="1"/>
</dbReference>
<dbReference type="Gene3D" id="2.30.29.30">
    <property type="entry name" value="Pleckstrin-homology domain (PH domain)/Phosphotyrosine-binding domain (PTB)"/>
    <property type="match status" value="1"/>
</dbReference>
<dbReference type="Gene3D" id="3.30.505.10">
    <property type="entry name" value="SH2 domain"/>
    <property type="match status" value="1"/>
</dbReference>
<dbReference type="InterPro" id="IPR011993">
    <property type="entry name" value="PH-like_dom_sf"/>
</dbReference>
<dbReference type="InterPro" id="IPR001849">
    <property type="entry name" value="PH_domain"/>
</dbReference>
<dbReference type="InterPro" id="IPR000980">
    <property type="entry name" value="SH2"/>
</dbReference>
<dbReference type="InterPro" id="IPR036860">
    <property type="entry name" value="SH2_dom_sf"/>
</dbReference>
<dbReference type="InterPro" id="IPR035848">
    <property type="entry name" value="SH3BP2"/>
</dbReference>
<dbReference type="InterPro" id="IPR035847">
    <property type="entry name" value="SH3BP2_SH2"/>
</dbReference>
<dbReference type="PANTHER" id="PTHR15126:SF4">
    <property type="entry name" value="SH3 DOMAIN-BINDING PROTEIN 2"/>
    <property type="match status" value="1"/>
</dbReference>
<dbReference type="PANTHER" id="PTHR15126">
    <property type="entry name" value="SH3-BINDING"/>
    <property type="match status" value="1"/>
</dbReference>
<dbReference type="Pfam" id="PF00169">
    <property type="entry name" value="PH"/>
    <property type="match status" value="1"/>
</dbReference>
<dbReference type="Pfam" id="PF00017">
    <property type="entry name" value="SH2"/>
    <property type="match status" value="1"/>
</dbReference>
<dbReference type="SMART" id="SM00233">
    <property type="entry name" value="PH"/>
    <property type="match status" value="1"/>
</dbReference>
<dbReference type="SMART" id="SM00252">
    <property type="entry name" value="SH2"/>
    <property type="match status" value="1"/>
</dbReference>
<dbReference type="SUPFAM" id="SSF50729">
    <property type="entry name" value="PH domain-like"/>
    <property type="match status" value="1"/>
</dbReference>
<dbReference type="SUPFAM" id="SSF55550">
    <property type="entry name" value="SH2 domain"/>
    <property type="match status" value="1"/>
</dbReference>
<dbReference type="PROSITE" id="PS50003">
    <property type="entry name" value="PH_DOMAIN"/>
    <property type="match status" value="1"/>
</dbReference>
<dbReference type="PROSITE" id="PS50001">
    <property type="entry name" value="SH2"/>
    <property type="match status" value="1"/>
</dbReference>
<sequence>MAAEEMHWPVPMKAIGAQNLLTMPGGVAKAGYLHKKGGTQLQLLKWPLRFVIIHKRCVYYFKSSTSASPQGAFSLSGYNRVMRAAEETTSNNVFPFKIIHISKKHRTWFFSASSEEERKSWMALLRREIGHFHEKKDLPLDTSDSSSDTDSFYGAVERPVDISLSPYPTDNEDYEHDDEDDSYLEPDSPEPGRLEDALMHPPAYPPPPVPTPRKPAFSDMPRAHSFTSKGPGPLLPPPPPKHGLPDVGLAAEDSKRDPLCPRRAEPCPRVPATPRRMSDPPLSTMPTAPGLRKPPCFRESASPSPEPWTPGHGACSTSSAAIMATATSRNCDKLKSFHLSPRGPPTSEPPPVPANKPKFLKIAEEDPPREAAMPGLFVPPVAPRPPALKLPVPEAMARPAVLPRPEKPQLPHLQRSPPDGQSFRSFSFEKPRQPSQADTGGDDSDEDYEKVPLPNSVFVNTTESCEVERLFKATSPRGEPQDGLYCIRNSSTKSGKVLVVWDETSNKVRNYRIFEKDSKFYLEGEVLFVSVGSMVEHYHTHVLPSHQSLLLRHPYGYTGPR</sequence>
<evidence type="ECO:0000250" key="1"/>
<evidence type="ECO:0000250" key="2">
    <source>
        <dbReference type="UniProtKB" id="Q06649"/>
    </source>
</evidence>
<evidence type="ECO:0000255" key="3">
    <source>
        <dbReference type="PROSITE-ProRule" id="PRU00145"/>
    </source>
</evidence>
<evidence type="ECO:0000255" key="4">
    <source>
        <dbReference type="PROSITE-ProRule" id="PRU00191"/>
    </source>
</evidence>
<evidence type="ECO:0000256" key="5">
    <source>
        <dbReference type="SAM" id="MobiDB-lite"/>
    </source>
</evidence>
<evidence type="ECO:0000269" key="6">
    <source>
    </source>
</evidence>
<evidence type="ECO:0000269" key="7">
    <source>
    </source>
</evidence>
<evidence type="ECO:0000269" key="8">
    <source>
    </source>
</evidence>
<evidence type="ECO:0000269" key="9">
    <source>
    </source>
</evidence>
<evidence type="ECO:0000303" key="10">
    <source>
    </source>
</evidence>
<evidence type="ECO:0000303" key="11">
    <source>
    </source>
</evidence>
<evidence type="ECO:0000305" key="12"/>
<evidence type="ECO:0007744" key="13">
    <source>
    </source>
</evidence>
<evidence type="ECO:0007744" key="14">
    <source>
    </source>
</evidence>
<evidence type="ECO:0007744" key="15">
    <source>
    </source>
</evidence>
<evidence type="ECO:0007829" key="16">
    <source>
        <dbReference type="PDB" id="2CR4"/>
    </source>
</evidence>
<reference key="1">
    <citation type="journal article" date="1996" name="Blood">
        <title>3BP2 binds to phosphatidylinositols; linking the hemopoietic tyrosine kinase c-FES to the cytoplasmic membrane in a phosphorylation dependent mechanism.</title>
        <authorList>
            <person name="Gokemeijer J."/>
            <person name="Deligiannidis K.E."/>
            <person name="Ligris K."/>
            <person name="Ernst T.J."/>
        </authorList>
    </citation>
    <scope>NUCLEOTIDE SEQUENCE [MRNA] (ISOFORM 1)</scope>
    <source>
        <tissue>Tonsil</tissue>
    </source>
</reference>
<reference key="2">
    <citation type="journal article" date="1997" name="Genomics">
        <title>Identification and characterization of the human homologue of SH3BP2, an SH3 binding domain protein within a common region of deletion at 4p16.3 involved in bladder cancer.</title>
        <authorList>
            <person name="Bell S.M."/>
            <person name="Shaw M."/>
            <person name="Jou Y.-S."/>
            <person name="Myers R.M."/>
            <person name="Knowles M.A."/>
        </authorList>
    </citation>
    <scope>NUCLEOTIDE SEQUENCE [MRNA] (ISOFORM 1)</scope>
</reference>
<reference key="3">
    <citation type="journal article" date="1998" name="DNA Res.">
        <title>The primary structure and genomic organization of five novel transcripts located close to the Huntington's disease gene on human chromosome 4p16.3.</title>
        <authorList>
            <person name="Hadano S."/>
            <person name="Ishida Y."/>
            <person name="Ikeda J.-E."/>
        </authorList>
    </citation>
    <scope>NUCLEOTIDE SEQUENCE [MRNA] (ISOFORMS 1 AND 2)</scope>
    <scope>TISSUE SPECIFICITY</scope>
    <source>
        <tissue>Brain</tissue>
    </source>
</reference>
<reference key="4">
    <citation type="journal article" date="2004" name="Nat. Genet.">
        <title>Complete sequencing and characterization of 21,243 full-length human cDNAs.</title>
        <authorList>
            <person name="Ota T."/>
            <person name="Suzuki Y."/>
            <person name="Nishikawa T."/>
            <person name="Otsuki T."/>
            <person name="Sugiyama T."/>
            <person name="Irie R."/>
            <person name="Wakamatsu A."/>
            <person name="Hayashi K."/>
            <person name="Sato H."/>
            <person name="Nagai K."/>
            <person name="Kimura K."/>
            <person name="Makita H."/>
            <person name="Sekine M."/>
            <person name="Obayashi M."/>
            <person name="Nishi T."/>
            <person name="Shibahara T."/>
            <person name="Tanaka T."/>
            <person name="Ishii S."/>
            <person name="Yamamoto J."/>
            <person name="Saito K."/>
            <person name="Kawai Y."/>
            <person name="Isono Y."/>
            <person name="Nakamura Y."/>
            <person name="Nagahari K."/>
            <person name="Murakami K."/>
            <person name="Yasuda T."/>
            <person name="Iwayanagi T."/>
            <person name="Wagatsuma M."/>
            <person name="Shiratori A."/>
            <person name="Sudo H."/>
            <person name="Hosoiri T."/>
            <person name="Kaku Y."/>
            <person name="Kodaira H."/>
            <person name="Kondo H."/>
            <person name="Sugawara M."/>
            <person name="Takahashi M."/>
            <person name="Kanda K."/>
            <person name="Yokoi T."/>
            <person name="Furuya T."/>
            <person name="Kikkawa E."/>
            <person name="Omura Y."/>
            <person name="Abe K."/>
            <person name="Kamihara K."/>
            <person name="Katsuta N."/>
            <person name="Sato K."/>
            <person name="Tanikawa M."/>
            <person name="Yamazaki M."/>
            <person name="Ninomiya K."/>
            <person name="Ishibashi T."/>
            <person name="Yamashita H."/>
            <person name="Murakawa K."/>
            <person name="Fujimori K."/>
            <person name="Tanai H."/>
            <person name="Kimata M."/>
            <person name="Watanabe M."/>
            <person name="Hiraoka S."/>
            <person name="Chiba Y."/>
            <person name="Ishida S."/>
            <person name="Ono Y."/>
            <person name="Takiguchi S."/>
            <person name="Watanabe S."/>
            <person name="Yosida M."/>
            <person name="Hotuta T."/>
            <person name="Kusano J."/>
            <person name="Kanehori K."/>
            <person name="Takahashi-Fujii A."/>
            <person name="Hara H."/>
            <person name="Tanase T.-O."/>
            <person name="Nomura Y."/>
            <person name="Togiya S."/>
            <person name="Komai F."/>
            <person name="Hara R."/>
            <person name="Takeuchi K."/>
            <person name="Arita M."/>
            <person name="Imose N."/>
            <person name="Musashino K."/>
            <person name="Yuuki H."/>
            <person name="Oshima A."/>
            <person name="Sasaki N."/>
            <person name="Aotsuka S."/>
            <person name="Yoshikawa Y."/>
            <person name="Matsunawa H."/>
            <person name="Ichihara T."/>
            <person name="Shiohata N."/>
            <person name="Sano S."/>
            <person name="Moriya S."/>
            <person name="Momiyama H."/>
            <person name="Satoh N."/>
            <person name="Takami S."/>
            <person name="Terashima Y."/>
            <person name="Suzuki O."/>
            <person name="Nakagawa S."/>
            <person name="Senoh A."/>
            <person name="Mizoguchi H."/>
            <person name="Goto Y."/>
            <person name="Shimizu F."/>
            <person name="Wakebe H."/>
            <person name="Hishigaki H."/>
            <person name="Watanabe T."/>
            <person name="Sugiyama A."/>
            <person name="Takemoto M."/>
            <person name="Kawakami B."/>
            <person name="Yamazaki M."/>
            <person name="Watanabe K."/>
            <person name="Kumagai A."/>
            <person name="Itakura S."/>
            <person name="Fukuzumi Y."/>
            <person name="Fujimori Y."/>
            <person name="Komiyama M."/>
            <person name="Tashiro H."/>
            <person name="Tanigami A."/>
            <person name="Fujiwara T."/>
            <person name="Ono T."/>
            <person name="Yamada K."/>
            <person name="Fujii Y."/>
            <person name="Ozaki K."/>
            <person name="Hirao M."/>
            <person name="Ohmori Y."/>
            <person name="Kawabata A."/>
            <person name="Hikiji T."/>
            <person name="Kobatake N."/>
            <person name="Inagaki H."/>
            <person name="Ikema Y."/>
            <person name="Okamoto S."/>
            <person name="Okitani R."/>
            <person name="Kawakami T."/>
            <person name="Noguchi S."/>
            <person name="Itoh T."/>
            <person name="Shigeta K."/>
            <person name="Senba T."/>
            <person name="Matsumura K."/>
            <person name="Nakajima Y."/>
            <person name="Mizuno T."/>
            <person name="Morinaga M."/>
            <person name="Sasaki M."/>
            <person name="Togashi T."/>
            <person name="Oyama M."/>
            <person name="Hata H."/>
            <person name="Watanabe M."/>
            <person name="Komatsu T."/>
            <person name="Mizushima-Sugano J."/>
            <person name="Satoh T."/>
            <person name="Shirai Y."/>
            <person name="Takahashi Y."/>
            <person name="Nakagawa K."/>
            <person name="Okumura K."/>
            <person name="Nagase T."/>
            <person name="Nomura N."/>
            <person name="Kikuchi H."/>
            <person name="Masuho Y."/>
            <person name="Yamashita R."/>
            <person name="Nakai K."/>
            <person name="Yada T."/>
            <person name="Nakamura Y."/>
            <person name="Ohara O."/>
            <person name="Isogai T."/>
            <person name="Sugano S."/>
        </authorList>
    </citation>
    <scope>NUCLEOTIDE SEQUENCE [LARGE SCALE MRNA] (ISOFORMS 2 AND 3)</scope>
    <source>
        <tissue>Cerebellum</tissue>
    </source>
</reference>
<reference key="5">
    <citation type="journal article" date="2005" name="Nature">
        <title>Generation and annotation of the DNA sequences of human chromosomes 2 and 4.</title>
        <authorList>
            <person name="Hillier L.W."/>
            <person name="Graves T.A."/>
            <person name="Fulton R.S."/>
            <person name="Fulton L.A."/>
            <person name="Pepin K.H."/>
            <person name="Minx P."/>
            <person name="Wagner-McPherson C."/>
            <person name="Layman D."/>
            <person name="Wylie K."/>
            <person name="Sekhon M."/>
            <person name="Becker M.C."/>
            <person name="Fewell G.A."/>
            <person name="Delehaunty K.D."/>
            <person name="Miner T.L."/>
            <person name="Nash W.E."/>
            <person name="Kremitzki C."/>
            <person name="Oddy L."/>
            <person name="Du H."/>
            <person name="Sun H."/>
            <person name="Bradshaw-Cordum H."/>
            <person name="Ali J."/>
            <person name="Carter J."/>
            <person name="Cordes M."/>
            <person name="Harris A."/>
            <person name="Isak A."/>
            <person name="van Brunt A."/>
            <person name="Nguyen C."/>
            <person name="Du F."/>
            <person name="Courtney L."/>
            <person name="Kalicki J."/>
            <person name="Ozersky P."/>
            <person name="Abbott S."/>
            <person name="Armstrong J."/>
            <person name="Belter E.A."/>
            <person name="Caruso L."/>
            <person name="Cedroni M."/>
            <person name="Cotton M."/>
            <person name="Davidson T."/>
            <person name="Desai A."/>
            <person name="Elliott G."/>
            <person name="Erb T."/>
            <person name="Fronick C."/>
            <person name="Gaige T."/>
            <person name="Haakenson W."/>
            <person name="Haglund K."/>
            <person name="Holmes A."/>
            <person name="Harkins R."/>
            <person name="Kim K."/>
            <person name="Kruchowski S.S."/>
            <person name="Strong C.M."/>
            <person name="Grewal N."/>
            <person name="Goyea E."/>
            <person name="Hou S."/>
            <person name="Levy A."/>
            <person name="Martinka S."/>
            <person name="Mead K."/>
            <person name="McLellan M.D."/>
            <person name="Meyer R."/>
            <person name="Randall-Maher J."/>
            <person name="Tomlinson C."/>
            <person name="Dauphin-Kohlberg S."/>
            <person name="Kozlowicz-Reilly A."/>
            <person name="Shah N."/>
            <person name="Swearengen-Shahid S."/>
            <person name="Snider J."/>
            <person name="Strong J.T."/>
            <person name="Thompson J."/>
            <person name="Yoakum M."/>
            <person name="Leonard S."/>
            <person name="Pearman C."/>
            <person name="Trani L."/>
            <person name="Radionenko M."/>
            <person name="Waligorski J.E."/>
            <person name="Wang C."/>
            <person name="Rock S.M."/>
            <person name="Tin-Wollam A.-M."/>
            <person name="Maupin R."/>
            <person name="Latreille P."/>
            <person name="Wendl M.C."/>
            <person name="Yang S.-P."/>
            <person name="Pohl C."/>
            <person name="Wallis J.W."/>
            <person name="Spieth J."/>
            <person name="Bieri T.A."/>
            <person name="Berkowicz N."/>
            <person name="Nelson J.O."/>
            <person name="Osborne J."/>
            <person name="Ding L."/>
            <person name="Meyer R."/>
            <person name="Sabo A."/>
            <person name="Shotland Y."/>
            <person name="Sinha P."/>
            <person name="Wohldmann P.E."/>
            <person name="Cook L.L."/>
            <person name="Hickenbotham M.T."/>
            <person name="Eldred J."/>
            <person name="Williams D."/>
            <person name="Jones T.A."/>
            <person name="She X."/>
            <person name="Ciccarelli F.D."/>
            <person name="Izaurralde E."/>
            <person name="Taylor J."/>
            <person name="Schmutz J."/>
            <person name="Myers R.M."/>
            <person name="Cox D.R."/>
            <person name="Huang X."/>
            <person name="McPherson J.D."/>
            <person name="Mardis E.R."/>
            <person name="Clifton S.W."/>
            <person name="Warren W.C."/>
            <person name="Chinwalla A.T."/>
            <person name="Eddy S.R."/>
            <person name="Marra M.A."/>
            <person name="Ovcharenko I."/>
            <person name="Furey T.S."/>
            <person name="Miller W."/>
            <person name="Eichler E.E."/>
            <person name="Bork P."/>
            <person name="Suyama M."/>
            <person name="Torrents D."/>
            <person name="Waterston R.H."/>
            <person name="Wilson R.K."/>
        </authorList>
    </citation>
    <scope>NUCLEOTIDE SEQUENCE [LARGE SCALE GENOMIC DNA]</scope>
</reference>
<reference key="6">
    <citation type="submission" date="2005-09" db="EMBL/GenBank/DDBJ databases">
        <authorList>
            <person name="Mural R.J."/>
            <person name="Istrail S."/>
            <person name="Sutton G.G."/>
            <person name="Florea L."/>
            <person name="Halpern A.L."/>
            <person name="Mobarry C.M."/>
            <person name="Lippert R."/>
            <person name="Walenz B."/>
            <person name="Shatkay H."/>
            <person name="Dew I."/>
            <person name="Miller J.R."/>
            <person name="Flanigan M.J."/>
            <person name="Edwards N.J."/>
            <person name="Bolanos R."/>
            <person name="Fasulo D."/>
            <person name="Halldorsson B.V."/>
            <person name="Hannenhalli S."/>
            <person name="Turner R."/>
            <person name="Yooseph S."/>
            <person name="Lu F."/>
            <person name="Nusskern D.R."/>
            <person name="Shue B.C."/>
            <person name="Zheng X.H."/>
            <person name="Zhong F."/>
            <person name="Delcher A.L."/>
            <person name="Huson D.H."/>
            <person name="Kravitz S.A."/>
            <person name="Mouchard L."/>
            <person name="Reinert K."/>
            <person name="Remington K.A."/>
            <person name="Clark A.G."/>
            <person name="Waterman M.S."/>
            <person name="Eichler E.E."/>
            <person name="Adams M.D."/>
            <person name="Hunkapiller M.W."/>
            <person name="Myers E.W."/>
            <person name="Venter J.C."/>
        </authorList>
    </citation>
    <scope>NUCLEOTIDE SEQUENCE [LARGE SCALE GENOMIC DNA]</scope>
</reference>
<reference key="7">
    <citation type="journal article" date="2004" name="Genome Res.">
        <title>The status, quality, and expansion of the NIH full-length cDNA project: the Mammalian Gene Collection (MGC).</title>
        <authorList>
            <consortium name="The MGC Project Team"/>
        </authorList>
    </citation>
    <scope>NUCLEOTIDE SEQUENCE [LARGE SCALE MRNA] (ISOFORM 1)</scope>
    <source>
        <tissue>Cervix</tissue>
    </source>
</reference>
<reference key="8">
    <citation type="journal article" date="2004" name="Genome Biol.">
        <title>An unappreciated role for RNA surveillance.</title>
        <authorList>
            <person name="Hillman R.T."/>
            <person name="Green R.E."/>
            <person name="Brenner S.E."/>
        </authorList>
    </citation>
    <scope>SPLICE ISOFORM(S) THAT ARE POTENTIAL NMD TARGET(S)</scope>
</reference>
<reference key="9">
    <citation type="journal article" date="2008" name="Proc. Natl. Acad. Sci. U.S.A.">
        <title>A quantitative atlas of mitotic phosphorylation.</title>
        <authorList>
            <person name="Dephoure N."/>
            <person name="Zhou C."/>
            <person name="Villen J."/>
            <person name="Beausoleil S.A."/>
            <person name="Bakalarski C.E."/>
            <person name="Elledge S.J."/>
            <person name="Gygi S.P."/>
        </authorList>
    </citation>
    <scope>PHOSPHORYLATION [LARGE SCALE ANALYSIS] AT SER-278</scope>
    <scope>IDENTIFICATION BY MASS SPECTROMETRY [LARGE SCALE ANALYSIS]</scope>
    <source>
        <tissue>Cervix carcinoma</tissue>
    </source>
</reference>
<reference key="10">
    <citation type="journal article" date="2013" name="J. Proteome Res.">
        <title>Toward a comprehensive characterization of a human cancer cell phosphoproteome.</title>
        <authorList>
            <person name="Zhou H."/>
            <person name="Di Palma S."/>
            <person name="Preisinger C."/>
            <person name="Peng M."/>
            <person name="Polat A.N."/>
            <person name="Heck A.J."/>
            <person name="Mohammed S."/>
        </authorList>
    </citation>
    <scope>PHOSPHORYLATION [LARGE SCALE ANALYSIS] AT SER-278 AND SER-427</scope>
    <scope>IDENTIFICATION BY MASS SPECTROMETRY [LARGE SCALE ANALYSIS]</scope>
    <source>
        <tissue>Erythroleukemia</tissue>
    </source>
</reference>
<reference key="11">
    <citation type="journal article" date="2014" name="J. Proteomics">
        <title>An enzyme assisted RP-RPLC approach for in-depth analysis of human liver phosphoproteome.</title>
        <authorList>
            <person name="Bian Y."/>
            <person name="Song C."/>
            <person name="Cheng K."/>
            <person name="Dong M."/>
            <person name="Wang F."/>
            <person name="Huang J."/>
            <person name="Sun D."/>
            <person name="Wang L."/>
            <person name="Ye M."/>
            <person name="Zou H."/>
        </authorList>
    </citation>
    <scope>PHOSPHORYLATION [LARGE SCALE ANALYSIS] AT SER-278 AND SER-416</scope>
    <scope>IDENTIFICATION BY MASS SPECTROMETRY [LARGE SCALE ANALYSIS]</scope>
    <source>
        <tissue>Liver</tissue>
    </source>
</reference>
<reference key="12">
    <citation type="submission" date="2005-11" db="PDB data bank">
        <title>Solution structure of the SH2 domain of human SH3BP2 protein.</title>
        <authorList>
            <consortium name="RIKEN structural genomics initiative (RSGI)"/>
        </authorList>
    </citation>
    <scope>STRUCTURE BY NMR OF 444-558</scope>
</reference>
<reference key="13">
    <citation type="journal article" date="2001" name="Nat. Genet.">
        <title>Mutations in the gene encoding c-Abl-binding protein SH3BP2 cause cherubism.</title>
        <authorList>
            <person name="Ueki Y."/>
            <person name="Tiziani V."/>
            <person name="Santanna C."/>
            <person name="Fukai N."/>
            <person name="Maulik C."/>
            <person name="Garfinkle J."/>
            <person name="Ninomiya C."/>
            <person name="doAmaral C."/>
            <person name="Peters H."/>
            <person name="Habal M."/>
            <person name="Rhee-Morris L."/>
            <person name="Doss J.B."/>
            <person name="Kreiborg S."/>
            <person name="Olsen B.R."/>
            <person name="Reichenberger E."/>
        </authorList>
    </citation>
    <scope>VARIANTS CRBM GLN-415; PRO-415; ARG-418; HIS-418; LEU-418; ARG-420 AND GLU-420</scope>
</reference>
<reference key="14">
    <citation type="journal article" date="2003" name="Am. J. Med. Genet. A">
        <title>Novel mutation in the gene encoding c-Abl-binding protein SH3BP2 causes cherubism.</title>
        <authorList>
            <person name="Lo B."/>
            <person name="Faiyaz-Ul-Haque M."/>
            <person name="Kennedy S."/>
            <person name="Aviv R."/>
            <person name="Tsui L.-C."/>
            <person name="Teebi A.S."/>
        </authorList>
    </citation>
    <scope>VARIANT CRBM ARG-420</scope>
</reference>
<reference key="15">
    <citation type="journal article" date="2003" name="Cleft Palate Craniofac. J.">
        <title>A missense mutation in the SH3BP2 gene on chromosome 4p16.3 found in a case of nonfamilial cherubism.</title>
        <authorList>
            <person name="Imai Y."/>
            <person name="Kanno K."/>
            <person name="Moriya T."/>
            <person name="Kayano S."/>
            <person name="Seino H."/>
            <person name="Matsubara Y."/>
            <person name="Yamada A."/>
        </authorList>
    </citation>
    <scope>VARIANT CRBM ARG-418</scope>
</reference>
<comment type="function">
    <text>Binds differentially to the SH3 domains of certain proteins of signal transduction pathways. Binds to phosphatidylinositols; linking the hemopoietic tyrosine kinase fes to the cytoplasmic membrane in a phosphorylation dependent mechanism.</text>
</comment>
<comment type="interaction">
    <interactant intactId="EBI-727062">
        <id>P78314</id>
    </interactant>
    <interactant intactId="EBI-751783">
        <id>Q9UJU6</id>
        <label>DBNL</label>
    </interactant>
    <organismsDiffer>false</organismsDiffer>
    <experiments>7</experiments>
</comment>
<comment type="interaction">
    <interactant intactId="EBI-727062">
        <id>P78314</id>
    </interactant>
    <interactant intactId="EBI-1379503">
        <id>P10721</id>
        <label>KIT</label>
    </interactant>
    <organismsDiffer>false</organismsDiffer>
    <experiments>3</experiments>
</comment>
<comment type="interaction">
    <interactant intactId="EBI-727062">
        <id>P78314</id>
    </interactant>
    <interactant intactId="EBI-346595">
        <id>Q96B97</id>
        <label>SH3KBP1</label>
    </interactant>
    <organismsDiffer>false</organismsDiffer>
    <experiments>8</experiments>
</comment>
<comment type="interaction">
    <interactant intactId="EBI-727062">
        <id>P78314</id>
    </interactant>
    <interactant intactId="EBI-4398527">
        <id>Q9H2K2</id>
        <label>TNKS2</label>
    </interactant>
    <organismsDiffer>false</organismsDiffer>
    <experiments>5</experiments>
</comment>
<comment type="interaction">
    <interactant intactId="EBI-727062">
        <id>P78314</id>
    </interactant>
    <interactant intactId="EBI-625518">
        <id>P15498</id>
        <label>VAV1</label>
    </interactant>
    <organismsDiffer>false</organismsDiffer>
    <experiments>8</experiments>
</comment>
<comment type="interaction">
    <interactant intactId="EBI-727062">
        <id>P78314</id>
    </interactant>
    <interactant intactId="EBI-297549">
        <id>P52735</id>
        <label>VAV2</label>
    </interactant>
    <organismsDiffer>false</organismsDiffer>
    <experiments>4</experiments>
</comment>
<comment type="interaction">
    <interactant intactId="EBI-12304031">
        <id>P78314-3</id>
    </interactant>
    <interactant intactId="EBI-12748199">
        <id>Q14247-3</id>
        <label>CTTN</label>
    </interactant>
    <organismsDiffer>false</organismsDiffer>
    <experiments>3</experiments>
</comment>
<comment type="interaction">
    <interactant intactId="EBI-12304031">
        <id>P78314-3</id>
    </interactant>
    <interactant intactId="EBI-12192777">
        <id>Q9UJU6-2</id>
        <label>DBNL</label>
    </interactant>
    <organismsDiffer>false</organismsDiffer>
    <experiments>3</experiments>
</comment>
<comment type="interaction">
    <interactant intactId="EBI-12304031">
        <id>P78314-3</id>
    </interactant>
    <interactant intactId="EBI-750369">
        <id>P14317</id>
        <label>HCLS1</label>
    </interactant>
    <organismsDiffer>false</organismsDiffer>
    <experiments>3</experiments>
</comment>
<comment type="interaction">
    <interactant intactId="EBI-12304031">
        <id>P78314-3</id>
    </interactant>
    <interactant intactId="EBI-741792">
        <id>O00160</id>
        <label>MYO1F</label>
    </interactant>
    <organismsDiffer>false</organismsDiffer>
    <experiments>3</experiments>
</comment>
<comment type="alternative products">
    <event type="alternative splicing"/>
    <isoform>
        <id>P78314-1</id>
        <name>1</name>
        <name>Long</name>
        <sequence type="displayed"/>
    </isoform>
    <isoform>
        <id>P78314-2</id>
        <name>2</name>
        <name>Short</name>
        <sequence type="described" ref="VSP_004085 VSP_004086"/>
    </isoform>
    <isoform>
        <id>P78314-3</id>
        <name>3</name>
        <sequence type="described" ref="VSP_043636"/>
    </isoform>
    <isoform>
        <id>P78314-4</id>
        <name>4</name>
        <sequence type="described" ref="VSP_055046"/>
    </isoform>
</comment>
<comment type="tissue specificity">
    <text evidence="9">Expressed in a variety of tissues including lung, liver, skeletal muscle, kidney and pancreas.</text>
</comment>
<comment type="PTM">
    <text evidence="1">Phosphorylated. Phosphorylation at Tyr-448 may stimulate the activity of the LYN kinase (By similarity).</text>
</comment>
<comment type="disease" evidence="6 7 8">
    <disease id="DI-00296">
        <name>Cherubism</name>
        <acronym>CRBM</acronym>
        <description>An autosomal dominant syndrome characterized by excessive bone degradation of the upper and lower jaws, which often begins around three years of age. It is followed by development of fibrous tissue masses, which causes a characteristic facial swelling.</description>
        <dbReference type="MIM" id="118400"/>
    </disease>
    <text>The disease is caused by variants affecting the gene represented in this entry.</text>
</comment>
<comment type="miscellaneous">
    <molecule>Isoform 2</molecule>
    <text evidence="12">May be produced at very low levels due to a premature stop codon in the mRNA, leading to nonsense-mediated mRNA decay.</text>
</comment>
<organism>
    <name type="scientific">Homo sapiens</name>
    <name type="common">Human</name>
    <dbReference type="NCBI Taxonomy" id="9606"/>
    <lineage>
        <taxon>Eukaryota</taxon>
        <taxon>Metazoa</taxon>
        <taxon>Chordata</taxon>
        <taxon>Craniata</taxon>
        <taxon>Vertebrata</taxon>
        <taxon>Euteleostomi</taxon>
        <taxon>Mammalia</taxon>
        <taxon>Eutheria</taxon>
        <taxon>Euarchontoglires</taxon>
        <taxon>Primates</taxon>
        <taxon>Haplorrhini</taxon>
        <taxon>Catarrhini</taxon>
        <taxon>Hominidae</taxon>
        <taxon>Homo</taxon>
    </lineage>
</organism>
<name>3BP2_HUMAN</name>
<accession>P78314</accession>
<accession>A6NNC2</accession>
<accession>B2R5R6</accession>
<accession>B4DT04</accession>
<accession>D3DVR0</accession>
<accession>D6R919</accession>
<accession>O00500</accession>
<accession>O15373</accession>
<accession>P78315</accession>
<protein>
    <recommendedName>
        <fullName>SH3 domain-binding protein 2</fullName>
        <shortName>3BP-2</shortName>
    </recommendedName>
</protein>